<evidence type="ECO:0000255" key="1">
    <source>
        <dbReference type="HAMAP-Rule" id="MF_00473"/>
    </source>
</evidence>
<evidence type="ECO:0000305" key="2"/>
<feature type="chain" id="PRO_0000180621" description="Glucose-6-phosphate isomerase">
    <location>
        <begin position="1"/>
        <end position="530"/>
    </location>
</feature>
<feature type="active site" description="Proton donor" evidence="1">
    <location>
        <position position="347"/>
    </location>
</feature>
<feature type="active site" evidence="1">
    <location>
        <position position="378"/>
    </location>
</feature>
<feature type="active site" evidence="1">
    <location>
        <position position="493"/>
    </location>
</feature>
<dbReference type="EC" id="5.3.1.9" evidence="1"/>
<dbReference type="EMBL" id="CR848038">
    <property type="protein sequence ID" value="CAH64150.1"/>
    <property type="status" value="ALT_INIT"/>
    <property type="molecule type" value="Genomic_DNA"/>
</dbReference>
<dbReference type="RefSeq" id="WP_041461364.1">
    <property type="nucleotide sequence ID" value="NC_004552.2"/>
</dbReference>
<dbReference type="SMR" id="Q5L5E1"/>
<dbReference type="KEGG" id="cab:CAB703"/>
<dbReference type="eggNOG" id="COG0166">
    <property type="taxonomic scope" value="Bacteria"/>
</dbReference>
<dbReference type="HOGENOM" id="CLU_017947_3_1_0"/>
<dbReference type="UniPathway" id="UPA00109">
    <property type="reaction ID" value="UER00181"/>
</dbReference>
<dbReference type="UniPathway" id="UPA00138"/>
<dbReference type="Proteomes" id="UP000001012">
    <property type="component" value="Chromosome"/>
</dbReference>
<dbReference type="GO" id="GO:0005829">
    <property type="term" value="C:cytosol"/>
    <property type="evidence" value="ECO:0007669"/>
    <property type="project" value="TreeGrafter"/>
</dbReference>
<dbReference type="GO" id="GO:0097367">
    <property type="term" value="F:carbohydrate derivative binding"/>
    <property type="evidence" value="ECO:0007669"/>
    <property type="project" value="InterPro"/>
</dbReference>
<dbReference type="GO" id="GO:0004347">
    <property type="term" value="F:glucose-6-phosphate isomerase activity"/>
    <property type="evidence" value="ECO:0007669"/>
    <property type="project" value="UniProtKB-UniRule"/>
</dbReference>
<dbReference type="GO" id="GO:0048029">
    <property type="term" value="F:monosaccharide binding"/>
    <property type="evidence" value="ECO:0007669"/>
    <property type="project" value="TreeGrafter"/>
</dbReference>
<dbReference type="GO" id="GO:0006094">
    <property type="term" value="P:gluconeogenesis"/>
    <property type="evidence" value="ECO:0007669"/>
    <property type="project" value="UniProtKB-UniRule"/>
</dbReference>
<dbReference type="GO" id="GO:0051156">
    <property type="term" value="P:glucose 6-phosphate metabolic process"/>
    <property type="evidence" value="ECO:0007669"/>
    <property type="project" value="TreeGrafter"/>
</dbReference>
<dbReference type="GO" id="GO:0006096">
    <property type="term" value="P:glycolytic process"/>
    <property type="evidence" value="ECO:0007669"/>
    <property type="project" value="UniProtKB-UniRule"/>
</dbReference>
<dbReference type="CDD" id="cd05015">
    <property type="entry name" value="SIS_PGI_1"/>
    <property type="match status" value="1"/>
</dbReference>
<dbReference type="CDD" id="cd05016">
    <property type="entry name" value="SIS_PGI_2"/>
    <property type="match status" value="1"/>
</dbReference>
<dbReference type="Gene3D" id="1.10.1390.10">
    <property type="match status" value="1"/>
</dbReference>
<dbReference type="Gene3D" id="3.40.50.10490">
    <property type="entry name" value="Glucose-6-phosphate isomerase like protein, domain 1"/>
    <property type="match status" value="2"/>
</dbReference>
<dbReference type="HAMAP" id="MF_00473">
    <property type="entry name" value="G6P_isomerase"/>
    <property type="match status" value="1"/>
</dbReference>
<dbReference type="InterPro" id="IPR001672">
    <property type="entry name" value="G6P_Isomerase"/>
</dbReference>
<dbReference type="InterPro" id="IPR023096">
    <property type="entry name" value="G6P_Isomerase_C"/>
</dbReference>
<dbReference type="InterPro" id="IPR018189">
    <property type="entry name" value="Phosphoglucose_isomerase_CS"/>
</dbReference>
<dbReference type="InterPro" id="IPR046348">
    <property type="entry name" value="SIS_dom_sf"/>
</dbReference>
<dbReference type="InterPro" id="IPR035476">
    <property type="entry name" value="SIS_PGI_1"/>
</dbReference>
<dbReference type="InterPro" id="IPR035482">
    <property type="entry name" value="SIS_PGI_2"/>
</dbReference>
<dbReference type="NCBIfam" id="NF010695">
    <property type="entry name" value="PRK14095.1"/>
    <property type="match status" value="1"/>
</dbReference>
<dbReference type="PANTHER" id="PTHR11469">
    <property type="entry name" value="GLUCOSE-6-PHOSPHATE ISOMERASE"/>
    <property type="match status" value="1"/>
</dbReference>
<dbReference type="PANTHER" id="PTHR11469:SF1">
    <property type="entry name" value="GLUCOSE-6-PHOSPHATE ISOMERASE"/>
    <property type="match status" value="1"/>
</dbReference>
<dbReference type="Pfam" id="PF00342">
    <property type="entry name" value="PGI"/>
    <property type="match status" value="1"/>
</dbReference>
<dbReference type="PRINTS" id="PR00662">
    <property type="entry name" value="G6PISOMERASE"/>
</dbReference>
<dbReference type="SUPFAM" id="SSF53697">
    <property type="entry name" value="SIS domain"/>
    <property type="match status" value="1"/>
</dbReference>
<dbReference type="PROSITE" id="PS00765">
    <property type="entry name" value="P_GLUCOSE_ISOMERASE_1"/>
    <property type="match status" value="1"/>
</dbReference>
<dbReference type="PROSITE" id="PS00174">
    <property type="entry name" value="P_GLUCOSE_ISOMERASE_2"/>
    <property type="match status" value="1"/>
</dbReference>
<dbReference type="PROSITE" id="PS51463">
    <property type="entry name" value="P_GLUCOSE_ISOMERASE_3"/>
    <property type="match status" value="1"/>
</dbReference>
<accession>Q5L5E1</accession>
<comment type="function">
    <text evidence="1">Catalyzes the reversible isomerization of glucose-6-phosphate to fructose-6-phosphate.</text>
</comment>
<comment type="catalytic activity">
    <reaction evidence="1">
        <text>alpha-D-glucose 6-phosphate = beta-D-fructose 6-phosphate</text>
        <dbReference type="Rhea" id="RHEA:11816"/>
        <dbReference type="ChEBI" id="CHEBI:57634"/>
        <dbReference type="ChEBI" id="CHEBI:58225"/>
        <dbReference type="EC" id="5.3.1.9"/>
    </reaction>
</comment>
<comment type="pathway">
    <text evidence="1">Carbohydrate biosynthesis; gluconeogenesis.</text>
</comment>
<comment type="pathway">
    <text evidence="1">Carbohydrate degradation; glycolysis; D-glyceraldehyde 3-phosphate and glycerone phosphate from D-glucose: step 2/4.</text>
</comment>
<comment type="subcellular location">
    <subcellularLocation>
        <location evidence="1">Cytoplasm</location>
    </subcellularLocation>
</comment>
<comment type="similarity">
    <text evidence="1">Belongs to the GPI family.</text>
</comment>
<comment type="sequence caution" evidence="2">
    <conflict type="erroneous initiation">
        <sequence resource="EMBL-CDS" id="CAH64150"/>
    </conflict>
</comment>
<keyword id="KW-0963">Cytoplasm</keyword>
<keyword id="KW-0312">Gluconeogenesis</keyword>
<keyword id="KW-0324">Glycolysis</keyword>
<keyword id="KW-0413">Isomerase</keyword>
<reference key="1">
    <citation type="journal article" date="2005" name="Genome Res.">
        <title>The Chlamydophila abortus genome sequence reveals an array of variable proteins that contribute to interspecies variation.</title>
        <authorList>
            <person name="Thomson N.R."/>
            <person name="Yeats C."/>
            <person name="Bell K."/>
            <person name="Holden M.T.G."/>
            <person name="Bentley S.D."/>
            <person name="Livingstone M."/>
            <person name="Cerdeno-Tarraga A.-M."/>
            <person name="Harris B."/>
            <person name="Doggett J."/>
            <person name="Ormond D."/>
            <person name="Mungall K."/>
            <person name="Clarke K."/>
            <person name="Feltwell T."/>
            <person name="Hance Z."/>
            <person name="Sanders M."/>
            <person name="Quail M.A."/>
            <person name="Price C."/>
            <person name="Barrell B.G."/>
            <person name="Parkhill J."/>
            <person name="Longbottom D."/>
        </authorList>
    </citation>
    <scope>NUCLEOTIDE SEQUENCE [LARGE SCALE GENOMIC DNA]</scope>
    <source>
        <strain>DSM 27085 / S26/3</strain>
    </source>
</reference>
<sequence length="530" mass="57820">MDRKGFLDSPSTKILQDLAVAPVDLTTPGIISQERVERFSLSIGGFTLSYATERVDEGVVSALTDLASERGLVSSMQAMQSGEVVNYIDNFPSESRPALHTATRAWVKEIPLTGNAEDIALRSKIEAQRLKDFLHQYRDAFTTIVQIGIGGSELGPKALHRALKGCCPSDKKVYFVSNIDPDNAAEVLQEIDCSKTLVVTVSKSGTTLETAVNEEFIADHFLKQGLHFRDHFIAVTCEGSPMDDRSKYLEVFHIWDSIGGRYSSTSMVGGVVLGFAYGFDVFFQLLEGAAAMDLAALAPQMSENLPMLAAMLGIWNRNFLGYPTSVIVPYSAGLEYFPAHLQQCGMESNGKSIAQTGEIIGFATSPILWGEVGTNSQHSFFQCLHQGSDVIPIEFIGFLDNQRGRDIVISGSTSSQKLFANMVAQSIALAKGRENTNPNKSFRGNRPSSLLVAERLTPYTMGALLAFYEHKIVFQGFCWGINSFDQEGVTLGKDLANQVLGIMQGQAKEGACLEAEALLKLFNSTQKKKS</sequence>
<name>G6PI_CHLAB</name>
<gene>
    <name evidence="1" type="primary">pgi</name>
    <name type="ordered locus">CAB703</name>
</gene>
<proteinExistence type="inferred from homology"/>
<organism>
    <name type="scientific">Chlamydia abortus (strain DSM 27085 / S26/3)</name>
    <name type="common">Chlamydophila abortus</name>
    <dbReference type="NCBI Taxonomy" id="218497"/>
    <lineage>
        <taxon>Bacteria</taxon>
        <taxon>Pseudomonadati</taxon>
        <taxon>Chlamydiota</taxon>
        <taxon>Chlamydiia</taxon>
        <taxon>Chlamydiales</taxon>
        <taxon>Chlamydiaceae</taxon>
        <taxon>Chlamydia/Chlamydophila group</taxon>
        <taxon>Chlamydia</taxon>
    </lineage>
</organism>
<protein>
    <recommendedName>
        <fullName evidence="1">Glucose-6-phosphate isomerase</fullName>
        <shortName evidence="1">GPI</shortName>
        <ecNumber evidence="1">5.3.1.9</ecNumber>
    </recommendedName>
    <alternativeName>
        <fullName evidence="1">Phosphoglucose isomerase</fullName>
        <shortName evidence="1">PGI</shortName>
    </alternativeName>
    <alternativeName>
        <fullName evidence="1">Phosphohexose isomerase</fullName>
        <shortName evidence="1">PHI</shortName>
    </alternativeName>
</protein>